<comment type="function">
    <text evidence="1">Plays a role in growth cones guidance. May function to pattern sensory projections by selectively repelling axons that normally terminate dorsally. Involved in the development of the olfactory system and in neuronal control of puberty (By similarity).</text>
</comment>
<comment type="subunit">
    <text evidence="6">Interacts with PXND1.</text>
</comment>
<comment type="interaction">
    <interactant intactId="EBI-8586029">
        <id>O08665</id>
    </interactant>
    <interactant intactId="EBI-1555129">
        <id>P97333</id>
        <label>Nrp1</label>
    </interactant>
    <organismsDiffer>false</organismsDiffer>
    <experiments>3</experiments>
</comment>
<comment type="subcellular location">
    <subcellularLocation>
        <location>Secreted</location>
    </subcellularLocation>
</comment>
<comment type="developmental stage">
    <text>Expressed early in embryonic development (11 dpc) in distinct regions of the neuroectoderm and mesoderm. Expression became more extensive at later stages.</text>
</comment>
<comment type="domain">
    <text>Strong binding to neuropilin is mediated by the carboxy third of the protein.</text>
</comment>
<comment type="similarity">
    <text evidence="7">Belongs to the semaphorin family.</text>
</comment>
<dbReference type="EMBL" id="X85993">
    <property type="protein sequence ID" value="CAA59985.1"/>
    <property type="molecule type" value="mRNA"/>
</dbReference>
<dbReference type="EMBL" id="D85028">
    <property type="protein sequence ID" value="BAA19773.1"/>
    <property type="molecule type" value="mRNA"/>
</dbReference>
<dbReference type="EMBL" id="L41541">
    <property type="protein sequence ID" value="AAL77611.1"/>
    <property type="molecule type" value="mRNA"/>
</dbReference>
<dbReference type="EMBL" id="AC022368">
    <property type="status" value="NOT_ANNOTATED_CDS"/>
    <property type="molecule type" value="Genomic_DNA"/>
</dbReference>
<dbReference type="EMBL" id="AC109165">
    <property type="status" value="NOT_ANNOTATED_CDS"/>
    <property type="molecule type" value="Genomic_DNA"/>
</dbReference>
<dbReference type="EMBL" id="AC121125">
    <property type="status" value="NOT_ANNOTATED_CDS"/>
    <property type="molecule type" value="Genomic_DNA"/>
</dbReference>
<dbReference type="EMBL" id="AC121841">
    <property type="status" value="NOT_ANNOTATED_CDS"/>
    <property type="molecule type" value="Genomic_DNA"/>
</dbReference>
<dbReference type="EMBL" id="AC159971">
    <property type="status" value="NOT_ANNOTATED_CDS"/>
    <property type="molecule type" value="Genomic_DNA"/>
</dbReference>
<dbReference type="EMBL" id="BC057588">
    <property type="protein sequence ID" value="AAH57588.1"/>
    <property type="molecule type" value="mRNA"/>
</dbReference>
<dbReference type="EMBL" id="BC090844">
    <property type="protein sequence ID" value="AAH90844.1"/>
    <property type="molecule type" value="mRNA"/>
</dbReference>
<dbReference type="EMBL" id="L40484">
    <property type="protein sequence ID" value="AAA73934.1"/>
    <property type="molecule type" value="mRNA"/>
</dbReference>
<dbReference type="CCDS" id="CCDS19092.1"/>
<dbReference type="PIR" id="I48747">
    <property type="entry name" value="I48747"/>
</dbReference>
<dbReference type="PIR" id="I58169">
    <property type="entry name" value="I58169"/>
</dbReference>
<dbReference type="RefSeq" id="NP_001230001.1">
    <property type="nucleotide sequence ID" value="NM_001243072.1"/>
</dbReference>
<dbReference type="RefSeq" id="NP_001230002.1">
    <property type="nucleotide sequence ID" value="NM_001243073.1"/>
</dbReference>
<dbReference type="RefSeq" id="NP_033178.2">
    <property type="nucleotide sequence ID" value="NM_009152.4"/>
</dbReference>
<dbReference type="RefSeq" id="XP_006503620.1">
    <property type="nucleotide sequence ID" value="XM_006503557.3"/>
</dbReference>
<dbReference type="RefSeq" id="XP_006503621.1">
    <property type="nucleotide sequence ID" value="XM_006503558.3"/>
</dbReference>
<dbReference type="RefSeq" id="XP_006503622.1">
    <property type="nucleotide sequence ID" value="XM_006503559.1"/>
</dbReference>
<dbReference type="RefSeq" id="XP_011238967.1">
    <property type="nucleotide sequence ID" value="XM_011240665.2"/>
</dbReference>
<dbReference type="PDB" id="1Q47">
    <property type="method" value="X-ray"/>
    <property type="resolution" value="2.80 A"/>
    <property type="chains" value="A/B=26-520"/>
</dbReference>
<dbReference type="PDB" id="4GZ8">
    <property type="method" value="X-ray"/>
    <property type="resolution" value="3.30 A"/>
    <property type="chains" value="A/B=21-569"/>
</dbReference>
<dbReference type="PDB" id="4GZA">
    <property type="method" value="X-ray"/>
    <property type="resolution" value="7.00 A"/>
    <property type="chains" value="G=21-555"/>
</dbReference>
<dbReference type="PDB" id="7M0R">
    <property type="method" value="EM"/>
    <property type="resolution" value="3.70 A"/>
    <property type="chains" value="C/D=21-569"/>
</dbReference>
<dbReference type="PDBsum" id="1Q47"/>
<dbReference type="PDBsum" id="4GZ8"/>
<dbReference type="PDBsum" id="4GZA"/>
<dbReference type="PDBsum" id="7M0R"/>
<dbReference type="EMDB" id="EMD-23613"/>
<dbReference type="SMR" id="O08665"/>
<dbReference type="BioGRID" id="203161">
    <property type="interactions" value="7"/>
</dbReference>
<dbReference type="CORUM" id="O08665"/>
<dbReference type="DIP" id="DIP-59997N"/>
<dbReference type="FunCoup" id="O08665">
    <property type="interactions" value="164"/>
</dbReference>
<dbReference type="IntAct" id="O08665">
    <property type="interactions" value="2"/>
</dbReference>
<dbReference type="MINT" id="O08665"/>
<dbReference type="STRING" id="10090.ENSMUSP00000030714"/>
<dbReference type="GlyCosmos" id="O08665">
    <property type="glycosylation" value="3 sites, No reported glycans"/>
</dbReference>
<dbReference type="GlyGen" id="O08665">
    <property type="glycosylation" value="3 sites, 1 N-linked glycan (1 site)"/>
</dbReference>
<dbReference type="iPTMnet" id="O08665"/>
<dbReference type="PhosphoSitePlus" id="O08665"/>
<dbReference type="PaxDb" id="10090-ENSMUSP00000030714"/>
<dbReference type="PeptideAtlas" id="O08665"/>
<dbReference type="ProteomicsDB" id="256770"/>
<dbReference type="Pumba" id="O08665"/>
<dbReference type="Antibodypedia" id="29608">
    <property type="antibodies" value="317 antibodies from 32 providers"/>
</dbReference>
<dbReference type="DNASU" id="20346"/>
<dbReference type="GeneID" id="20346"/>
<dbReference type="KEGG" id="mmu:20346"/>
<dbReference type="UCSC" id="uc008wmb.3">
    <property type="organism name" value="mouse"/>
</dbReference>
<dbReference type="AGR" id="MGI:107558"/>
<dbReference type="CTD" id="10371"/>
<dbReference type="MGI" id="MGI:107558">
    <property type="gene designation" value="Sema3a"/>
</dbReference>
<dbReference type="VEuPathDB" id="HostDB:ENSMUSG00000028883"/>
<dbReference type="eggNOG" id="KOG3611">
    <property type="taxonomic scope" value="Eukaryota"/>
</dbReference>
<dbReference type="InParanoid" id="O08665"/>
<dbReference type="OrthoDB" id="9988752at2759"/>
<dbReference type="PhylomeDB" id="O08665"/>
<dbReference type="TreeFam" id="TF316102"/>
<dbReference type="Reactome" id="R-MMU-399954">
    <property type="pathway name" value="Sema3A PAK dependent Axon repulsion"/>
</dbReference>
<dbReference type="Reactome" id="R-MMU-399955">
    <property type="pathway name" value="SEMA3A-Plexin repulsion signaling by inhibiting Integrin adhesion"/>
</dbReference>
<dbReference type="Reactome" id="R-MMU-399956">
    <property type="pathway name" value="CRMPs in Sema3A signaling"/>
</dbReference>
<dbReference type="BioGRID-ORCS" id="20346">
    <property type="hits" value="4 hits in 79 CRISPR screens"/>
</dbReference>
<dbReference type="ChiTaRS" id="Sema3a">
    <property type="organism name" value="mouse"/>
</dbReference>
<dbReference type="EvolutionaryTrace" id="O08665"/>
<dbReference type="PRO" id="PR:O08665"/>
<dbReference type="Proteomes" id="UP000000589">
    <property type="component" value="Chromosome 5"/>
</dbReference>
<dbReference type="RNAct" id="O08665">
    <property type="molecule type" value="protein"/>
</dbReference>
<dbReference type="ExpressionAtlas" id="O08665">
    <property type="expression patterns" value="baseline and differential"/>
</dbReference>
<dbReference type="GO" id="GO:0150053">
    <property type="term" value="C:cerebellar climbing fiber to Purkinje cell synapse"/>
    <property type="evidence" value="ECO:0000314"/>
    <property type="project" value="SynGO"/>
</dbReference>
<dbReference type="GO" id="GO:0005576">
    <property type="term" value="C:extracellular region"/>
    <property type="evidence" value="ECO:0000304"/>
    <property type="project" value="Reactome"/>
</dbReference>
<dbReference type="GO" id="GO:0005615">
    <property type="term" value="C:extracellular space"/>
    <property type="evidence" value="ECO:0007005"/>
    <property type="project" value="BHF-UCL"/>
</dbReference>
<dbReference type="GO" id="GO:0098978">
    <property type="term" value="C:glutamatergic synapse"/>
    <property type="evidence" value="ECO:0000314"/>
    <property type="project" value="SynGO"/>
</dbReference>
<dbReference type="GO" id="GO:0045499">
    <property type="term" value="F:chemorepellent activity"/>
    <property type="evidence" value="ECO:0000314"/>
    <property type="project" value="MGI"/>
</dbReference>
<dbReference type="GO" id="GO:0038191">
    <property type="term" value="F:neuropilin binding"/>
    <property type="evidence" value="ECO:0000353"/>
    <property type="project" value="BHF-UCL"/>
</dbReference>
<dbReference type="GO" id="GO:0030215">
    <property type="term" value="F:semaphorin receptor binding"/>
    <property type="evidence" value="ECO:0000353"/>
    <property type="project" value="MGI"/>
</dbReference>
<dbReference type="GO" id="GO:0048675">
    <property type="term" value="P:axon extension"/>
    <property type="evidence" value="ECO:0000314"/>
    <property type="project" value="MGI"/>
</dbReference>
<dbReference type="GO" id="GO:0048846">
    <property type="term" value="P:axon extension involved in axon guidance"/>
    <property type="evidence" value="ECO:0000314"/>
    <property type="project" value="MGI"/>
</dbReference>
<dbReference type="GO" id="GO:0007411">
    <property type="term" value="P:axon guidance"/>
    <property type="evidence" value="ECO:0000314"/>
    <property type="project" value="MGI"/>
</dbReference>
<dbReference type="GO" id="GO:0007413">
    <property type="term" value="P:axonal fasciculation"/>
    <property type="evidence" value="ECO:0000315"/>
    <property type="project" value="MGI"/>
</dbReference>
<dbReference type="GO" id="GO:0060385">
    <property type="term" value="P:axonogenesis involved in innervation"/>
    <property type="evidence" value="ECO:0000315"/>
    <property type="project" value="BHF-UCL"/>
</dbReference>
<dbReference type="GO" id="GO:0150020">
    <property type="term" value="P:basal dendrite arborization"/>
    <property type="evidence" value="ECO:0000316"/>
    <property type="project" value="ARUK-UCL"/>
</dbReference>
<dbReference type="GO" id="GO:0021785">
    <property type="term" value="P:branchiomotor neuron axon guidance"/>
    <property type="evidence" value="ECO:0000315"/>
    <property type="project" value="ParkinsonsUK-UCL"/>
</dbReference>
<dbReference type="GO" id="GO:0048813">
    <property type="term" value="P:dendrite morphogenesis"/>
    <property type="evidence" value="ECO:0000315"/>
    <property type="project" value="MGI"/>
</dbReference>
<dbReference type="GO" id="GO:0060666">
    <property type="term" value="P:dichotomous subdivision of terminal units involved in salivary gland branching"/>
    <property type="evidence" value="ECO:0000314"/>
    <property type="project" value="MGI"/>
</dbReference>
<dbReference type="GO" id="GO:0010631">
    <property type="term" value="P:epithelial cell migration"/>
    <property type="evidence" value="ECO:0000314"/>
    <property type="project" value="MGI"/>
</dbReference>
<dbReference type="GO" id="GO:0021612">
    <property type="term" value="P:facial nerve structural organization"/>
    <property type="evidence" value="ECO:0000315"/>
    <property type="project" value="ParkinsonsUK-UCL"/>
</dbReference>
<dbReference type="GO" id="GO:1903375">
    <property type="term" value="P:facioacoustic ganglion development"/>
    <property type="evidence" value="ECO:0000315"/>
    <property type="project" value="ParkinsonsUK-UCL"/>
</dbReference>
<dbReference type="GO" id="GO:0021828">
    <property type="term" value="P:gonadotrophin-releasing hormone neuronal migration to the hypothalamus"/>
    <property type="evidence" value="ECO:0000315"/>
    <property type="project" value="BHF-UCL"/>
</dbReference>
<dbReference type="GO" id="GO:0099558">
    <property type="term" value="P:maintenance of synapse structure"/>
    <property type="evidence" value="ECO:0000314"/>
    <property type="project" value="SynGO"/>
</dbReference>
<dbReference type="GO" id="GO:0008045">
    <property type="term" value="P:motor neuron axon guidance"/>
    <property type="evidence" value="ECO:0000315"/>
    <property type="project" value="ParkinsonsUK-UCL"/>
</dbReference>
<dbReference type="GO" id="GO:0050919">
    <property type="term" value="P:negative chemotaxis"/>
    <property type="evidence" value="ECO:0000316"/>
    <property type="project" value="MGI"/>
</dbReference>
<dbReference type="GO" id="GO:0030517">
    <property type="term" value="P:negative regulation of axon extension"/>
    <property type="evidence" value="ECO:0000314"/>
    <property type="project" value="MGI"/>
</dbReference>
<dbReference type="GO" id="GO:0048843">
    <property type="term" value="P:negative regulation of axon extension involved in axon guidance"/>
    <property type="evidence" value="ECO:0000314"/>
    <property type="project" value="MGI"/>
</dbReference>
<dbReference type="GO" id="GO:0010633">
    <property type="term" value="P:negative regulation of epithelial cell migration"/>
    <property type="evidence" value="ECO:0000314"/>
    <property type="project" value="MGI"/>
</dbReference>
<dbReference type="GO" id="GO:0021675">
    <property type="term" value="P:nerve development"/>
    <property type="evidence" value="ECO:0000315"/>
    <property type="project" value="BHF-UCL"/>
</dbReference>
<dbReference type="GO" id="GO:0007399">
    <property type="term" value="P:nervous system development"/>
    <property type="evidence" value="ECO:0000316"/>
    <property type="project" value="MGI"/>
</dbReference>
<dbReference type="GO" id="GO:1901166">
    <property type="term" value="P:neural crest cell migration involved in autonomic nervous system development"/>
    <property type="evidence" value="ECO:0000315"/>
    <property type="project" value="ParkinsonsUK-UCL"/>
</dbReference>
<dbReference type="GO" id="GO:1903045">
    <property type="term" value="P:neural crest cell migration involved in sympathetic nervous system development"/>
    <property type="evidence" value="ECO:0000315"/>
    <property type="project" value="BHF-UCL"/>
</dbReference>
<dbReference type="GO" id="GO:0001764">
    <property type="term" value="P:neuron migration"/>
    <property type="evidence" value="ECO:0000315"/>
    <property type="project" value="BHF-UCL"/>
</dbReference>
<dbReference type="GO" id="GO:0021772">
    <property type="term" value="P:olfactory bulb development"/>
    <property type="evidence" value="ECO:0000250"/>
    <property type="project" value="UniProtKB"/>
</dbReference>
<dbReference type="GO" id="GO:2000020">
    <property type="term" value="P:positive regulation of male gonad development"/>
    <property type="evidence" value="ECO:0000315"/>
    <property type="project" value="BHF-UCL"/>
</dbReference>
<dbReference type="GO" id="GO:2001224">
    <property type="term" value="P:positive regulation of neuron migration"/>
    <property type="evidence" value="ECO:0000316"/>
    <property type="project" value="BHF-UCL"/>
</dbReference>
<dbReference type="GO" id="GO:0048841">
    <property type="term" value="P:regulation of axon extension involved in axon guidance"/>
    <property type="evidence" value="ECO:0000314"/>
    <property type="project" value="UniProtKB"/>
</dbReference>
<dbReference type="GO" id="GO:0002027">
    <property type="term" value="P:regulation of heart rate"/>
    <property type="evidence" value="ECO:0000315"/>
    <property type="project" value="MGI"/>
</dbReference>
<dbReference type="GO" id="GO:0071526">
    <property type="term" value="P:semaphorin-plexin signaling pathway"/>
    <property type="evidence" value="ECO:0000315"/>
    <property type="project" value="ParkinsonsUK-UCL"/>
</dbReference>
<dbReference type="GO" id="GO:0061549">
    <property type="term" value="P:sympathetic ganglion development"/>
    <property type="evidence" value="ECO:0000315"/>
    <property type="project" value="BHF-UCL"/>
</dbReference>
<dbReference type="GO" id="GO:0097490">
    <property type="term" value="P:sympathetic neuron projection extension"/>
    <property type="evidence" value="ECO:0000315"/>
    <property type="project" value="BHF-UCL"/>
</dbReference>
<dbReference type="GO" id="GO:0097491">
    <property type="term" value="P:sympathetic neuron projection guidance"/>
    <property type="evidence" value="ECO:0000315"/>
    <property type="project" value="BHF-UCL"/>
</dbReference>
<dbReference type="GO" id="GO:0008039">
    <property type="term" value="P:synaptic target recognition"/>
    <property type="evidence" value="ECO:0000314"/>
    <property type="project" value="SynGO"/>
</dbReference>
<dbReference type="GO" id="GO:0061551">
    <property type="term" value="P:trigeminal ganglion development"/>
    <property type="evidence" value="ECO:0000315"/>
    <property type="project" value="ParkinsonsUK-UCL"/>
</dbReference>
<dbReference type="GO" id="GO:0021637">
    <property type="term" value="P:trigeminal nerve structural organization"/>
    <property type="evidence" value="ECO:0000315"/>
    <property type="project" value="ParkinsonsUK-UCL"/>
</dbReference>
<dbReference type="GO" id="GO:0036486">
    <property type="term" value="P:ventral trunk neural crest cell migration"/>
    <property type="evidence" value="ECO:0000315"/>
    <property type="project" value="ParkinsonsUK-UCL"/>
</dbReference>
<dbReference type="CDD" id="cd05871">
    <property type="entry name" value="Ig_Sema3"/>
    <property type="match status" value="1"/>
</dbReference>
<dbReference type="CDD" id="cd11249">
    <property type="entry name" value="Sema_3A"/>
    <property type="match status" value="1"/>
</dbReference>
<dbReference type="FunFam" id="2.130.10.10:FF:000015">
    <property type="entry name" value="Semaphorin 3B"/>
    <property type="match status" value="1"/>
</dbReference>
<dbReference type="FunFam" id="2.60.40.10:FF:000030">
    <property type="entry name" value="Semaphorin 3F like"/>
    <property type="match status" value="1"/>
</dbReference>
<dbReference type="FunFam" id="3.30.1680.10:FF:000001">
    <property type="entry name" value="Semaphorin 3F like"/>
    <property type="match status" value="1"/>
</dbReference>
<dbReference type="Gene3D" id="2.60.40.10">
    <property type="entry name" value="Immunoglobulins"/>
    <property type="match status" value="1"/>
</dbReference>
<dbReference type="Gene3D" id="3.30.1680.10">
    <property type="entry name" value="ligand-binding face of the semaphorins, domain 2"/>
    <property type="match status" value="1"/>
</dbReference>
<dbReference type="Gene3D" id="2.130.10.10">
    <property type="entry name" value="YVTN repeat-like/Quinoprotein amine dehydrogenase"/>
    <property type="match status" value="1"/>
</dbReference>
<dbReference type="InterPro" id="IPR007110">
    <property type="entry name" value="Ig-like_dom"/>
</dbReference>
<dbReference type="InterPro" id="IPR036179">
    <property type="entry name" value="Ig-like_dom_sf"/>
</dbReference>
<dbReference type="InterPro" id="IPR013783">
    <property type="entry name" value="Ig-like_fold"/>
</dbReference>
<dbReference type="InterPro" id="IPR003599">
    <property type="entry name" value="Ig_sub"/>
</dbReference>
<dbReference type="InterPro" id="IPR041416">
    <property type="entry name" value="IL-1RAcP-like_ig"/>
</dbReference>
<dbReference type="InterPro" id="IPR016201">
    <property type="entry name" value="PSI"/>
</dbReference>
<dbReference type="InterPro" id="IPR042820">
    <property type="entry name" value="Sema3A_sema"/>
</dbReference>
<dbReference type="InterPro" id="IPR001627">
    <property type="entry name" value="Semap_dom"/>
</dbReference>
<dbReference type="InterPro" id="IPR036352">
    <property type="entry name" value="Semap_dom_sf"/>
</dbReference>
<dbReference type="InterPro" id="IPR027231">
    <property type="entry name" value="Semaphorin"/>
</dbReference>
<dbReference type="InterPro" id="IPR015943">
    <property type="entry name" value="WD40/YVTN_repeat-like_dom_sf"/>
</dbReference>
<dbReference type="PANTHER" id="PTHR11036">
    <property type="entry name" value="SEMAPHORIN"/>
    <property type="match status" value="1"/>
</dbReference>
<dbReference type="PANTHER" id="PTHR11036:SF23">
    <property type="entry name" value="SEMAPHORIN-3A"/>
    <property type="match status" value="1"/>
</dbReference>
<dbReference type="Pfam" id="PF18452">
    <property type="entry name" value="Ig_6"/>
    <property type="match status" value="1"/>
</dbReference>
<dbReference type="Pfam" id="PF01403">
    <property type="entry name" value="Sema"/>
    <property type="match status" value="1"/>
</dbReference>
<dbReference type="SMART" id="SM00409">
    <property type="entry name" value="IG"/>
    <property type="match status" value="1"/>
</dbReference>
<dbReference type="SMART" id="SM00423">
    <property type="entry name" value="PSI"/>
    <property type="match status" value="1"/>
</dbReference>
<dbReference type="SMART" id="SM00630">
    <property type="entry name" value="Sema"/>
    <property type="match status" value="1"/>
</dbReference>
<dbReference type="SUPFAM" id="SSF48726">
    <property type="entry name" value="Immunoglobulin"/>
    <property type="match status" value="1"/>
</dbReference>
<dbReference type="SUPFAM" id="SSF103575">
    <property type="entry name" value="Plexin repeat"/>
    <property type="match status" value="1"/>
</dbReference>
<dbReference type="SUPFAM" id="SSF101912">
    <property type="entry name" value="Sema domain"/>
    <property type="match status" value="1"/>
</dbReference>
<dbReference type="PROSITE" id="PS50835">
    <property type="entry name" value="IG_LIKE"/>
    <property type="match status" value="1"/>
</dbReference>
<dbReference type="PROSITE" id="PS51004">
    <property type="entry name" value="SEMA"/>
    <property type="match status" value="1"/>
</dbReference>
<reference key="1">
    <citation type="journal article" date="1995" name="Neuron">
        <title>Murine semaphorin D/collapsin is a member of a diverse gene family and creates domains inhibitory for axonal extension.</title>
        <authorList>
            <person name="Pueschel A.W."/>
            <person name="Adams R.H."/>
            <person name="Betz H."/>
        </authorList>
    </citation>
    <scope>NUCLEOTIDE SEQUENCE [MRNA]</scope>
    <source>
        <strain>NMRI</strain>
        <tissue>Embryo</tissue>
    </source>
</reference>
<reference key="2">
    <citation type="journal article" date="1997" name="Neuron">
        <title>Disruption of semaphorin III/D gene causes severe abnormality in peripheral nerve projection.</title>
        <authorList>
            <person name="Taniguchi M."/>
            <person name="Yuasa S."/>
            <person name="Fujisawa H."/>
            <person name="Naruse I."/>
            <person name="Saga S."/>
            <person name="Mishina M."/>
            <person name="Yagi T."/>
        </authorList>
    </citation>
    <scope>NUCLEOTIDE SEQUENCE [MRNA]</scope>
</reference>
<reference key="3">
    <citation type="submission" date="2002-02" db="EMBL/GenBank/DDBJ databases">
        <title>cDNA sequence of mouse collapsin/semaphorin III.</title>
        <authorList>
            <person name="Kimura T."/>
            <person name="Fishman M.C."/>
        </authorList>
    </citation>
    <scope>NUCLEOTIDE SEQUENCE [MRNA]</scope>
</reference>
<reference key="4">
    <citation type="journal article" date="2009" name="PLoS Biol.">
        <title>Lineage-specific biology revealed by a finished genome assembly of the mouse.</title>
        <authorList>
            <person name="Church D.M."/>
            <person name="Goodstadt L."/>
            <person name="Hillier L.W."/>
            <person name="Zody M.C."/>
            <person name="Goldstein S."/>
            <person name="She X."/>
            <person name="Bult C.J."/>
            <person name="Agarwala R."/>
            <person name="Cherry J.L."/>
            <person name="DiCuccio M."/>
            <person name="Hlavina W."/>
            <person name="Kapustin Y."/>
            <person name="Meric P."/>
            <person name="Maglott D."/>
            <person name="Birtle Z."/>
            <person name="Marques A.C."/>
            <person name="Graves T."/>
            <person name="Zhou S."/>
            <person name="Teague B."/>
            <person name="Potamousis K."/>
            <person name="Churas C."/>
            <person name="Place M."/>
            <person name="Herschleb J."/>
            <person name="Runnheim R."/>
            <person name="Forrest D."/>
            <person name="Amos-Landgraf J."/>
            <person name="Schwartz D.C."/>
            <person name="Cheng Z."/>
            <person name="Lindblad-Toh K."/>
            <person name="Eichler E.E."/>
            <person name="Ponting C.P."/>
        </authorList>
    </citation>
    <scope>NUCLEOTIDE SEQUENCE [LARGE SCALE GENOMIC DNA]</scope>
    <source>
        <strain>C57BL/6J</strain>
    </source>
</reference>
<reference key="5">
    <citation type="journal article" date="2004" name="Genome Res.">
        <title>The status, quality, and expansion of the NIH full-length cDNA project: the Mammalian Gene Collection (MGC).</title>
        <authorList>
            <consortium name="The MGC Project Team"/>
        </authorList>
    </citation>
    <scope>NUCLEOTIDE SEQUENCE [LARGE SCALE MRNA]</scope>
    <source>
        <strain>C57BL/6J</strain>
        <tissue>Brain</tissue>
    </source>
</reference>
<reference key="6">
    <citation type="journal article" date="1995" name="Neuron">
        <title>Semaphorin III can function as a selective chemorepellent to pattern sensory projections in the spinal cord.</title>
        <authorList>
            <person name="Messersmith E.K."/>
            <person name="Leonardo E.D."/>
            <person name="Shatz C.J."/>
            <person name="Tessier-Lavigne M."/>
            <person name="Goodman C.S."/>
            <person name="Kolodkin A.L."/>
        </authorList>
    </citation>
    <scope>NUCLEOTIDE SEQUENCE [MRNA] OF 107-772</scope>
    <source>
        <tissue>Fetal brain</tissue>
    </source>
</reference>
<reference key="7">
    <citation type="journal article" date="2004" name="Dev. Cell">
        <title>PlexinD1 and semaphorin signaling are required in endothelial cells for cardiovascular development.</title>
        <authorList>
            <person name="Gitler A.D."/>
            <person name="Lu M.M."/>
            <person name="Epstein J.A."/>
        </authorList>
    </citation>
    <scope>INTERACTION WITH PLXND1</scope>
</reference>
<reference key="8">
    <citation type="journal article" date="2003" name="Neuron">
        <title>Structure of the semaphorin-3A receptor binding module.</title>
        <authorList>
            <person name="Antipenko A."/>
            <person name="Himanen J.P."/>
            <person name="van Leyen K."/>
            <person name="Nardi-Dei V."/>
            <person name="Lesniak J."/>
            <person name="Barton W.A."/>
            <person name="Rajashankar K.R."/>
            <person name="Lu M."/>
            <person name="Hoemme C."/>
            <person name="Puschel A.W."/>
            <person name="Nikolov D.B."/>
        </authorList>
    </citation>
    <scope>X-RAY CRYSTALLOGRAPHY (2.8 ANGSTROMS) OF 26-520</scope>
    <scope>GLYCOSYLATION AT ASN-53 AND ASN-125</scope>
    <scope>DISULFIDE BONDS</scope>
</reference>
<protein>
    <recommendedName>
        <fullName>Semaphorin-3A</fullName>
    </recommendedName>
    <alternativeName>
        <fullName>Semaphorin III</fullName>
        <shortName>Sema III</shortName>
    </alternativeName>
    <alternativeName>
        <fullName>Semaphorin-D</fullName>
        <shortName>Sema D</shortName>
    </alternativeName>
</protein>
<feature type="signal peptide" evidence="2">
    <location>
        <begin position="1"/>
        <end position="20"/>
    </location>
</feature>
<feature type="chain" id="PRO_0000032304" description="Semaphorin-3A">
    <location>
        <begin position="21"/>
        <end position="772"/>
    </location>
</feature>
<feature type="domain" description="Sema" evidence="3">
    <location>
        <begin position="31"/>
        <end position="514"/>
    </location>
</feature>
<feature type="domain" description="Ig-like C2-type">
    <location>
        <begin position="579"/>
        <end position="665"/>
    </location>
</feature>
<feature type="region of interest" description="Disordered" evidence="4">
    <location>
        <begin position="729"/>
        <end position="772"/>
    </location>
</feature>
<feature type="compositionally biased region" description="Basic residues" evidence="4">
    <location>
        <begin position="729"/>
        <end position="738"/>
    </location>
</feature>
<feature type="compositionally biased region" description="Basic and acidic residues" evidence="4">
    <location>
        <begin position="750"/>
        <end position="772"/>
    </location>
</feature>
<feature type="glycosylation site" description="N-linked (GlcNAc...) asparagine" evidence="5">
    <location>
        <position position="53"/>
    </location>
</feature>
<feature type="glycosylation site" description="N-linked (GlcNAc...) asparagine" evidence="5">
    <location>
        <position position="125"/>
    </location>
</feature>
<feature type="glycosylation site" description="N-linked (GlcNAc...) asparagine" evidence="2">
    <location>
        <position position="591"/>
    </location>
</feature>
<feature type="disulfide bond" evidence="5">
    <location>
        <begin position="103"/>
        <end position="114"/>
    </location>
</feature>
<feature type="disulfide bond" evidence="5">
    <location>
        <begin position="132"/>
        <end position="141"/>
    </location>
</feature>
<feature type="disulfide bond" evidence="5">
    <location>
        <begin position="269"/>
        <end position="381"/>
    </location>
</feature>
<feature type="disulfide bond" evidence="5">
    <location>
        <begin position="293"/>
        <end position="341"/>
    </location>
</feature>
<feature type="disulfide bond" evidence="1">
    <location>
        <begin position="517"/>
        <end position="535"/>
    </location>
</feature>
<feature type="disulfide bond" evidence="1">
    <location>
        <begin position="650"/>
        <end position="723"/>
    </location>
</feature>
<feature type="sequence conflict" description="In Ref. 6; AAA73934." evidence="7" ref="6">
    <original>D</original>
    <variation>N</variation>
    <location>
        <position position="193"/>
    </location>
</feature>
<feature type="sequence conflict" description="In Ref. 1; CAA59985." evidence="7" ref="1">
    <original>H</original>
    <variation>D</variation>
    <location>
        <position position="207"/>
    </location>
</feature>
<feature type="sequence conflict" description="In Ref. 1; CAA59985." evidence="7" ref="1">
    <original>D</original>
    <variation>G</variation>
    <location>
        <position position="253"/>
    </location>
</feature>
<feature type="sequence conflict" description="In Ref. 6; AAA73934." evidence="7" ref="6">
    <original>F</original>
    <variation>L</variation>
    <location>
        <position position="352"/>
    </location>
</feature>
<feature type="sequence conflict" description="In Ref. 1; CAA59985." evidence="7" ref="1">
    <original>A</original>
    <variation>G</variation>
    <location>
        <position position="403"/>
    </location>
</feature>
<feature type="sequence conflict" description="In Ref. 1; CAA59985, 2; BAA19773, 3; AAL77611, 5; AAH57588/AAH90844 and 6; AAA73934." evidence="7" ref="1 2 3 5 6">
    <original>I</original>
    <variation>V</variation>
    <location>
        <position position="475"/>
    </location>
</feature>
<feature type="sequence conflict" description="In Ref. 1; CAA59985." evidence="7" ref="1">
    <original>QH</original>
    <variation>ED</variation>
    <location>
        <begin position="571"/>
        <end position="572"/>
    </location>
</feature>
<feature type="sequence conflict" description="In Ref. 1; CAA59985." evidence="7" ref="1">
    <original>EDRKE</original>
    <variation>RRSKR</variation>
    <location>
        <begin position="616"/>
        <end position="620"/>
    </location>
</feature>
<feature type="sequence conflict" description="In Ref. 6; AAA73934." evidence="7" ref="6">
    <original>R</original>
    <variation>K</variation>
    <location>
        <position position="623"/>
    </location>
</feature>
<feature type="strand" evidence="9">
    <location>
        <begin position="31"/>
        <end position="34"/>
    </location>
</feature>
<feature type="helix" evidence="8">
    <location>
        <begin position="36"/>
        <end position="40"/>
    </location>
</feature>
<feature type="turn" evidence="8">
    <location>
        <begin position="41"/>
        <end position="43"/>
    </location>
</feature>
<feature type="strand" evidence="8">
    <location>
        <begin position="46"/>
        <end position="48"/>
    </location>
</feature>
<feature type="strand" evidence="8">
    <location>
        <begin position="59"/>
        <end position="63"/>
    </location>
</feature>
<feature type="turn" evidence="8">
    <location>
        <begin position="64"/>
        <end position="67"/>
    </location>
</feature>
<feature type="strand" evidence="8">
    <location>
        <begin position="68"/>
        <end position="74"/>
    </location>
</feature>
<feature type="strand" evidence="8">
    <location>
        <begin position="76"/>
        <end position="83"/>
    </location>
</feature>
<feature type="strand" evidence="8">
    <location>
        <begin position="87"/>
        <end position="92"/>
    </location>
</feature>
<feature type="helix" evidence="8">
    <location>
        <begin position="97"/>
        <end position="105"/>
    </location>
</feature>
<feature type="turn" evidence="8">
    <location>
        <begin position="110"/>
        <end position="113"/>
    </location>
</feature>
<feature type="strand" evidence="8">
    <location>
        <begin position="117"/>
        <end position="123"/>
    </location>
</feature>
<feature type="strand" evidence="8">
    <location>
        <begin position="125"/>
        <end position="133"/>
    </location>
</feature>
<feature type="strand" evidence="8">
    <location>
        <begin position="136"/>
        <end position="138"/>
    </location>
</feature>
<feature type="strand" evidence="8">
    <location>
        <begin position="140"/>
        <end position="145"/>
    </location>
</feature>
<feature type="strand" evidence="9">
    <location>
        <begin position="148"/>
        <end position="151"/>
    </location>
</feature>
<feature type="strand" evidence="8">
    <location>
        <begin position="156"/>
        <end position="164"/>
    </location>
</feature>
<feature type="turn" evidence="8">
    <location>
        <begin position="166"/>
        <end position="168"/>
    </location>
</feature>
<feature type="strand" evidence="9">
    <location>
        <begin position="171"/>
        <end position="175"/>
    </location>
</feature>
<feature type="strand" evidence="8">
    <location>
        <begin position="178"/>
        <end position="182"/>
    </location>
</feature>
<feature type="strand" evidence="8">
    <location>
        <begin position="185"/>
        <end position="191"/>
    </location>
</feature>
<feature type="strand" evidence="8">
    <location>
        <begin position="199"/>
        <end position="208"/>
    </location>
</feature>
<feature type="turn" evidence="8">
    <location>
        <begin position="218"/>
        <end position="220"/>
    </location>
</feature>
<feature type="strand" evidence="8">
    <location>
        <begin position="225"/>
        <end position="232"/>
    </location>
</feature>
<feature type="strand" evidence="8">
    <location>
        <begin position="235"/>
        <end position="237"/>
    </location>
</feature>
<feature type="helix" evidence="8">
    <location>
        <begin position="238"/>
        <end position="240"/>
    </location>
</feature>
<feature type="strand" evidence="8">
    <location>
        <begin position="242"/>
        <end position="250"/>
    </location>
</feature>
<feature type="strand" evidence="8">
    <location>
        <begin position="261"/>
        <end position="269"/>
    </location>
</feature>
<feature type="strand" evidence="8">
    <location>
        <begin position="275"/>
        <end position="280"/>
    </location>
</feature>
<feature type="strand" evidence="8">
    <location>
        <begin position="287"/>
        <end position="291"/>
    </location>
</feature>
<feature type="strand" evidence="8">
    <location>
        <begin position="307"/>
        <end position="314"/>
    </location>
</feature>
<feature type="strand" evidence="8">
    <location>
        <begin position="323"/>
        <end position="329"/>
    </location>
</feature>
<feature type="strand" evidence="8">
    <location>
        <begin position="333"/>
        <end position="335"/>
    </location>
</feature>
<feature type="strand" evidence="8">
    <location>
        <begin position="338"/>
        <end position="343"/>
    </location>
</feature>
<feature type="helix" evidence="8">
    <location>
        <begin position="345"/>
        <end position="352"/>
    </location>
</feature>
<feature type="strand" evidence="8">
    <location>
        <begin position="356"/>
        <end position="358"/>
    </location>
</feature>
<feature type="strand" evidence="9">
    <location>
        <begin position="384"/>
        <end position="387"/>
    </location>
</feature>
<feature type="helix" evidence="8">
    <location>
        <begin position="392"/>
        <end position="394"/>
    </location>
</feature>
<feature type="helix" evidence="8">
    <location>
        <begin position="397"/>
        <end position="404"/>
    </location>
</feature>
<feature type="strand" evidence="8">
    <location>
        <begin position="408"/>
        <end position="411"/>
    </location>
</feature>
<feature type="helix" evidence="8">
    <location>
        <begin position="416"/>
        <end position="418"/>
    </location>
</feature>
<feature type="strand" evidence="8">
    <location>
        <begin position="421"/>
        <end position="429"/>
    </location>
</feature>
<feature type="strand" evidence="8">
    <location>
        <begin position="431"/>
        <end position="440"/>
    </location>
</feature>
<feature type="strand" evidence="8">
    <location>
        <begin position="445"/>
        <end position="453"/>
    </location>
</feature>
<feature type="strand" evidence="8">
    <location>
        <begin position="458"/>
        <end position="462"/>
    </location>
</feature>
<feature type="strand" evidence="8">
    <location>
        <begin position="466"/>
        <end position="468"/>
    </location>
</feature>
<feature type="strand" evidence="8">
    <location>
        <begin position="478"/>
        <end position="480"/>
    </location>
</feature>
<feature type="strand" evidence="8">
    <location>
        <begin position="483"/>
        <end position="485"/>
    </location>
</feature>
<feature type="strand" evidence="8">
    <location>
        <begin position="491"/>
        <end position="495"/>
    </location>
</feature>
<feature type="turn" evidence="8">
    <location>
        <begin position="496"/>
        <end position="499"/>
    </location>
</feature>
<feature type="strand" evidence="8">
    <location>
        <begin position="500"/>
        <end position="507"/>
    </location>
</feature>
<feature type="strand" evidence="8">
    <location>
        <begin position="509"/>
        <end position="514"/>
    </location>
</feature>
<feature type="helix" evidence="9">
    <location>
        <begin position="517"/>
        <end position="519"/>
    </location>
</feature>
<feature type="helix" evidence="9">
    <location>
        <begin position="524"/>
        <end position="529"/>
    </location>
</feature>
<feature type="strand" evidence="9">
    <location>
        <begin position="539"/>
        <end position="541"/>
    </location>
</feature>
<feature type="turn" evidence="9">
    <location>
        <begin position="564"/>
        <end position="566"/>
    </location>
</feature>
<name>SEM3A_MOUSE</name>
<proteinExistence type="evidence at protein level"/>
<organism>
    <name type="scientific">Mus musculus</name>
    <name type="common">Mouse</name>
    <dbReference type="NCBI Taxonomy" id="10090"/>
    <lineage>
        <taxon>Eukaryota</taxon>
        <taxon>Metazoa</taxon>
        <taxon>Chordata</taxon>
        <taxon>Craniata</taxon>
        <taxon>Vertebrata</taxon>
        <taxon>Euteleostomi</taxon>
        <taxon>Mammalia</taxon>
        <taxon>Eutheria</taxon>
        <taxon>Euarchontoglires</taxon>
        <taxon>Glires</taxon>
        <taxon>Rodentia</taxon>
        <taxon>Myomorpha</taxon>
        <taxon>Muroidea</taxon>
        <taxon>Muridae</taxon>
        <taxon>Murinae</taxon>
        <taxon>Mus</taxon>
        <taxon>Mus</taxon>
    </lineage>
</organism>
<accession>O08665</accession>
<accession>E9QK85</accession>
<accession>Q5BL08</accession>
<accession>Q62180</accession>
<accession>Q62215</accession>
<evidence type="ECO:0000250" key="1"/>
<evidence type="ECO:0000255" key="2"/>
<evidence type="ECO:0000255" key="3">
    <source>
        <dbReference type="PROSITE-ProRule" id="PRU00352"/>
    </source>
</evidence>
<evidence type="ECO:0000256" key="4">
    <source>
        <dbReference type="SAM" id="MobiDB-lite"/>
    </source>
</evidence>
<evidence type="ECO:0000269" key="5">
    <source>
    </source>
</evidence>
<evidence type="ECO:0000269" key="6">
    <source>
    </source>
</evidence>
<evidence type="ECO:0000305" key="7"/>
<evidence type="ECO:0007829" key="8">
    <source>
        <dbReference type="PDB" id="1Q47"/>
    </source>
</evidence>
<evidence type="ECO:0007829" key="9">
    <source>
        <dbReference type="PDB" id="4GZ8"/>
    </source>
</evidence>
<sequence length="772" mass="88813">MGWFTGIACLFWGVLLTARANYANGKNNVPRLKLSYKEMLESNNVITFNGLANSSSYHTFLLDEERSRLYVGAKDHIFSFNLVNIKDFQKIVWPVSYTRRDECKWAGKDILKECANFIKVLEAYNQTHLYACGTGAFHPICTYIEVGHHPEDNIFKLQDSHFENGRGKSPYDPKLLTASLLIDGELYSGTAADFMGRDFAIFRTLGHHHPIRTEQHDSRWLNDPRFISAHLIPESDNPEDDKVYFFFRENAIDGEHSGKATHARIGQICKNDFGGHRSLVNKWTTFLKARLICSVPGPNGIDTHFDELQDVFLMNSKDPKNPIVYGVFTTSSNIFKGSAVCMYSMSDVRRVFLGPYAHRDGPNYQWVPYQGRVPYPRPGTCPSKTFGGFDSTKDLPDDVITFARSHPAMYNPVFPINNRPIMIKTDVNYQFTQIVVDRVDAEDGQYDVMFIGTDVGTVLKVVSVPKETWHDLEEILLEEMTVFREPTTISAMELSTKQQQLYIGSTAGVAQLPLHRCDIYGKACAECCLARDPYCAWDGSSCSRYFPTAKRRTRRQDIRNGDPLTHCSDLQHHDNHHGPSLEERIIYGVENSSTFLECSPKSQRALVYWQFQRRNEDRKEEIRMGDHIIRTEQGLLLRSLQKKDSGNYLCHAVEHGFMQTLLKVTLEVIDTEHLEELLHKDDDGDGSKIKEMSSSMTPSQKVWYRDFMQLINHPNLNTMDEFCEQVWKRDRKQRRQRPGHSQGSSNKWKHMQESKKGRNRRTHEFERAPRSV</sequence>
<gene>
    <name type="primary">Sema3a</name>
    <name type="synonym">Semad</name>
    <name type="synonym">SemD</name>
</gene>
<keyword id="KW-0002">3D-structure</keyword>
<keyword id="KW-0217">Developmental protein</keyword>
<keyword id="KW-0221">Differentiation</keyword>
<keyword id="KW-1015">Disulfide bond</keyword>
<keyword id="KW-0325">Glycoprotein</keyword>
<keyword id="KW-0393">Immunoglobulin domain</keyword>
<keyword id="KW-0524">Neurogenesis</keyword>
<keyword id="KW-1185">Reference proteome</keyword>
<keyword id="KW-0964">Secreted</keyword>
<keyword id="KW-0732">Signal</keyword>